<reference key="1">
    <citation type="journal article" date="2008" name="J. Bacteriol.">
        <title>Complete genome sequence of uropathogenic Proteus mirabilis, a master of both adherence and motility.</title>
        <authorList>
            <person name="Pearson M.M."/>
            <person name="Sebaihia M."/>
            <person name="Churcher C."/>
            <person name="Quail M.A."/>
            <person name="Seshasayee A.S."/>
            <person name="Luscombe N.M."/>
            <person name="Abdellah Z."/>
            <person name="Arrosmith C."/>
            <person name="Atkin B."/>
            <person name="Chillingworth T."/>
            <person name="Hauser H."/>
            <person name="Jagels K."/>
            <person name="Moule S."/>
            <person name="Mungall K."/>
            <person name="Norbertczak H."/>
            <person name="Rabbinowitsch E."/>
            <person name="Walker D."/>
            <person name="Whithead S."/>
            <person name="Thomson N.R."/>
            <person name="Rather P.N."/>
            <person name="Parkhill J."/>
            <person name="Mobley H.L.T."/>
        </authorList>
    </citation>
    <scope>NUCLEOTIDE SEQUENCE [LARGE SCALE GENOMIC DNA]</scope>
    <source>
        <strain>HI4320</strain>
    </source>
</reference>
<keyword id="KW-0997">Cell inner membrane</keyword>
<keyword id="KW-1003">Cell membrane</keyword>
<keyword id="KW-0444">Lipid biosynthesis</keyword>
<keyword id="KW-0443">Lipid metabolism</keyword>
<keyword id="KW-0472">Membrane</keyword>
<keyword id="KW-0594">Phospholipid biosynthesis</keyword>
<keyword id="KW-1208">Phospholipid metabolism</keyword>
<keyword id="KW-1185">Reference proteome</keyword>
<keyword id="KW-0808">Transferase</keyword>
<keyword id="KW-0812">Transmembrane</keyword>
<keyword id="KW-1133">Transmembrane helix</keyword>
<evidence type="ECO:0000255" key="1">
    <source>
        <dbReference type="HAMAP-Rule" id="MF_01043"/>
    </source>
</evidence>
<name>PLSY_PROMH</name>
<accession>B4EW52</accession>
<gene>
    <name evidence="1" type="primary">plsY</name>
    <name type="ordered locus">PMI2364</name>
</gene>
<comment type="function">
    <text evidence="1">Catalyzes the transfer of an acyl group from acyl-phosphate (acyl-PO(4)) to glycerol-3-phosphate (G3P) to form lysophosphatidic acid (LPA). This enzyme utilizes acyl-phosphate as fatty acyl donor, but not acyl-CoA or acyl-ACP.</text>
</comment>
<comment type="catalytic activity">
    <reaction evidence="1">
        <text>an acyl phosphate + sn-glycerol 3-phosphate = a 1-acyl-sn-glycero-3-phosphate + phosphate</text>
        <dbReference type="Rhea" id="RHEA:34075"/>
        <dbReference type="ChEBI" id="CHEBI:43474"/>
        <dbReference type="ChEBI" id="CHEBI:57597"/>
        <dbReference type="ChEBI" id="CHEBI:57970"/>
        <dbReference type="ChEBI" id="CHEBI:59918"/>
        <dbReference type="EC" id="2.3.1.275"/>
    </reaction>
</comment>
<comment type="pathway">
    <text evidence="1">Lipid metabolism; phospholipid metabolism.</text>
</comment>
<comment type="subunit">
    <text evidence="1">Probably interacts with PlsX.</text>
</comment>
<comment type="subcellular location">
    <subcellularLocation>
        <location evidence="1">Cell inner membrane</location>
        <topology evidence="1">Multi-pass membrane protein</topology>
    </subcellularLocation>
</comment>
<comment type="similarity">
    <text evidence="1">Belongs to the PlsY family.</text>
</comment>
<protein>
    <recommendedName>
        <fullName evidence="1">Glycerol-3-phosphate acyltransferase</fullName>
    </recommendedName>
    <alternativeName>
        <fullName evidence="1">Acyl-PO4 G3P acyltransferase</fullName>
    </alternativeName>
    <alternativeName>
        <fullName evidence="1">Acyl-phosphate--glycerol-3-phosphate acyltransferase</fullName>
    </alternativeName>
    <alternativeName>
        <fullName evidence="1">G3P acyltransferase</fullName>
        <shortName evidence="1">GPAT</shortName>
        <ecNumber evidence="1">2.3.1.275</ecNumber>
    </alternativeName>
    <alternativeName>
        <fullName evidence="1">Lysophosphatidic acid synthase</fullName>
        <shortName evidence="1">LPA synthase</shortName>
    </alternativeName>
</protein>
<feature type="chain" id="PRO_1000136108" description="Glycerol-3-phosphate acyltransferase">
    <location>
        <begin position="1"/>
        <end position="218"/>
    </location>
</feature>
<feature type="transmembrane region" description="Helical" evidence="1">
    <location>
        <begin position="5"/>
        <end position="25"/>
    </location>
</feature>
<feature type="transmembrane region" description="Helical" evidence="1">
    <location>
        <begin position="53"/>
        <end position="73"/>
    </location>
</feature>
<feature type="transmembrane region" description="Helical" evidence="1">
    <location>
        <begin position="80"/>
        <end position="100"/>
    </location>
</feature>
<feature type="transmembrane region" description="Helical" evidence="1">
    <location>
        <begin position="115"/>
        <end position="135"/>
    </location>
</feature>
<feature type="transmembrane region" description="Helical" evidence="1">
    <location>
        <begin position="138"/>
        <end position="158"/>
    </location>
</feature>
<organism>
    <name type="scientific">Proteus mirabilis (strain HI4320)</name>
    <dbReference type="NCBI Taxonomy" id="529507"/>
    <lineage>
        <taxon>Bacteria</taxon>
        <taxon>Pseudomonadati</taxon>
        <taxon>Pseudomonadota</taxon>
        <taxon>Gammaproteobacteria</taxon>
        <taxon>Enterobacterales</taxon>
        <taxon>Morganellaceae</taxon>
        <taxon>Proteus</taxon>
    </lineage>
</organism>
<sequence>MSANALGMIIFAYLCGSISSAILICRLARLPDPRKFGSGNPGATNVLRIGGKLAAASVLICDVLKGMIPVWLAYYLNVPPFYLGIVAIAACLGHIYPVFFHFKGGKGVATAFGSIAAIGWDLSGLIAGTWLLTVLLSGYSSLGAIISALLAPFYVWWFKPEFTYPVALLSCLVLYRHHDNIQRLWRGQESRIWHKLKKKTEKTDKEIIQEAKEQEKED</sequence>
<proteinExistence type="inferred from homology"/>
<dbReference type="EC" id="2.3.1.275" evidence="1"/>
<dbReference type="EMBL" id="AM942759">
    <property type="protein sequence ID" value="CAR44669.1"/>
    <property type="molecule type" value="Genomic_DNA"/>
</dbReference>
<dbReference type="RefSeq" id="WP_004245577.1">
    <property type="nucleotide sequence ID" value="NC_010554.1"/>
</dbReference>
<dbReference type="SMR" id="B4EW52"/>
<dbReference type="EnsemblBacteria" id="CAR44669">
    <property type="protein sequence ID" value="CAR44669"/>
    <property type="gene ID" value="PMI2364"/>
</dbReference>
<dbReference type="GeneID" id="6801022"/>
<dbReference type="KEGG" id="pmr:PMI2364"/>
<dbReference type="eggNOG" id="COG0344">
    <property type="taxonomic scope" value="Bacteria"/>
</dbReference>
<dbReference type="HOGENOM" id="CLU_081254_0_2_6"/>
<dbReference type="UniPathway" id="UPA00085"/>
<dbReference type="Proteomes" id="UP000008319">
    <property type="component" value="Chromosome"/>
</dbReference>
<dbReference type="GO" id="GO:0005886">
    <property type="term" value="C:plasma membrane"/>
    <property type="evidence" value="ECO:0007669"/>
    <property type="project" value="UniProtKB-SubCell"/>
</dbReference>
<dbReference type="GO" id="GO:0043772">
    <property type="term" value="F:acyl-phosphate glycerol-3-phosphate acyltransferase activity"/>
    <property type="evidence" value="ECO:0007669"/>
    <property type="project" value="UniProtKB-UniRule"/>
</dbReference>
<dbReference type="GO" id="GO:0008654">
    <property type="term" value="P:phospholipid biosynthetic process"/>
    <property type="evidence" value="ECO:0007669"/>
    <property type="project" value="UniProtKB-UniRule"/>
</dbReference>
<dbReference type="HAMAP" id="MF_01043">
    <property type="entry name" value="PlsY"/>
    <property type="match status" value="1"/>
</dbReference>
<dbReference type="InterPro" id="IPR003811">
    <property type="entry name" value="G3P_acylTferase_PlsY"/>
</dbReference>
<dbReference type="NCBIfam" id="TIGR00023">
    <property type="entry name" value="glycerol-3-phosphate 1-O-acyltransferase PlsY"/>
    <property type="match status" value="1"/>
</dbReference>
<dbReference type="PANTHER" id="PTHR30309:SF0">
    <property type="entry name" value="GLYCEROL-3-PHOSPHATE ACYLTRANSFERASE-RELATED"/>
    <property type="match status" value="1"/>
</dbReference>
<dbReference type="PANTHER" id="PTHR30309">
    <property type="entry name" value="INNER MEMBRANE PROTEIN YGIH"/>
    <property type="match status" value="1"/>
</dbReference>
<dbReference type="Pfam" id="PF02660">
    <property type="entry name" value="G3P_acyltransf"/>
    <property type="match status" value="1"/>
</dbReference>
<dbReference type="SMART" id="SM01207">
    <property type="entry name" value="G3P_acyltransf"/>
    <property type="match status" value="1"/>
</dbReference>